<sequence length="106" mass="11725">MVYQIKDKADLNGQLTKASGKLVVLDFFATWCGPCKMISPKLAELSTQYADTVVVLKVDVDECEDIAMEYNISSMPTFVFLKNGVKVEEFAGANAQRLEDVIKANI</sequence>
<reference evidence="6" key="1">
    <citation type="journal article" date="2003" name="Genome Res.">
        <title>An evolutionary analysis of orphan genes in Drosophila.</title>
        <authorList>
            <person name="Domazet-Loso T."/>
            <person name="Tautz D."/>
        </authorList>
    </citation>
    <scope>NUCLEOTIDE SEQUENCE [MRNA]</scope>
</reference>
<accession>Q6XHI1</accession>
<evidence type="ECO:0000250" key="1"/>
<evidence type="ECO:0000250" key="2">
    <source>
        <dbReference type="UniProtKB" id="P47938"/>
    </source>
</evidence>
<evidence type="ECO:0000250" key="3">
    <source>
        <dbReference type="UniProtKB" id="Q9V429"/>
    </source>
</evidence>
<evidence type="ECO:0000255" key="4"/>
<evidence type="ECO:0000255" key="5">
    <source>
        <dbReference type="PROSITE-ProRule" id="PRU00691"/>
    </source>
</evidence>
<evidence type="ECO:0000312" key="6">
    <source>
        <dbReference type="EMBL" id="AAR10225.1"/>
    </source>
</evidence>
<proteinExistence type="inferred from homology"/>
<organism>
    <name type="scientific">Drosophila yakuba</name>
    <name type="common">Fruit fly</name>
    <dbReference type="NCBI Taxonomy" id="7245"/>
    <lineage>
        <taxon>Eukaryota</taxon>
        <taxon>Metazoa</taxon>
        <taxon>Ecdysozoa</taxon>
        <taxon>Arthropoda</taxon>
        <taxon>Hexapoda</taxon>
        <taxon>Insecta</taxon>
        <taxon>Pterygota</taxon>
        <taxon>Neoptera</taxon>
        <taxon>Endopterygota</taxon>
        <taxon>Diptera</taxon>
        <taxon>Brachycera</taxon>
        <taxon>Muscomorpha</taxon>
        <taxon>Ephydroidea</taxon>
        <taxon>Drosophilidae</taxon>
        <taxon>Drosophila</taxon>
        <taxon>Sophophora</taxon>
    </lineage>
</organism>
<comment type="function">
    <text evidence="2">Participates in various redox reactions through the reversible oxidation of its active center dithiol to a disulfide and catalyzes dithiol-disulfide exchange reactions. As a reducing substrate of peroxiredoxin 1, thioredoxin 2 is preferred over thioredoxin 1 (By similarity).</text>
</comment>
<comment type="similarity">
    <text evidence="4">Belongs to the thioredoxin family.</text>
</comment>
<gene>
    <name evidence="3" type="primary">Trx2</name>
</gene>
<keyword id="KW-1015">Disulfide bond</keyword>
<keyword id="KW-0249">Electron transport</keyword>
<keyword id="KW-0676">Redox-active center</keyword>
<keyword id="KW-0813">Transport</keyword>
<protein>
    <recommendedName>
        <fullName evidence="3">Thioredoxin-2</fullName>
        <shortName>Trx-2</shortName>
    </recommendedName>
</protein>
<feature type="chain" id="PRO_0000120035" description="Thioredoxin-2">
    <location>
        <begin position="1"/>
        <end position="106"/>
    </location>
</feature>
<feature type="domain" description="Thioredoxin" evidence="5">
    <location>
        <begin position="2"/>
        <end position="106"/>
    </location>
</feature>
<feature type="active site" description="Nucleophile" evidence="1">
    <location>
        <position position="32"/>
    </location>
</feature>
<feature type="active site" description="Nucleophile" evidence="1">
    <location>
        <position position="35"/>
    </location>
</feature>
<feature type="site" description="Deprotonates C-terminal active site Cys" evidence="1">
    <location>
        <position position="26"/>
    </location>
</feature>
<feature type="site" description="Contributes to redox potential value" evidence="1">
    <location>
        <position position="33"/>
    </location>
</feature>
<feature type="site" description="Contributes to redox potential value" evidence="1">
    <location>
        <position position="34"/>
    </location>
</feature>
<feature type="disulfide bond" description="Redox-active" evidence="2 5">
    <location>
        <begin position="32"/>
        <end position="35"/>
    </location>
</feature>
<name>THIO2_DROYA</name>
<dbReference type="EMBL" id="AY232202">
    <property type="protein sequence ID" value="AAR10225.1"/>
    <property type="molecule type" value="mRNA"/>
</dbReference>
<dbReference type="SMR" id="Q6XHI1"/>
<dbReference type="eggNOG" id="KOG0907">
    <property type="taxonomic scope" value="Eukaryota"/>
</dbReference>
<dbReference type="OrthoDB" id="2121326at2759"/>
<dbReference type="GO" id="GO:0005634">
    <property type="term" value="C:nucleus"/>
    <property type="evidence" value="ECO:0007669"/>
    <property type="project" value="EnsemblMetazoa"/>
</dbReference>
<dbReference type="GO" id="GO:0015038">
    <property type="term" value="F:glutathione disulfide oxidoreductase activity"/>
    <property type="evidence" value="ECO:0007669"/>
    <property type="project" value="EnsemblMetazoa"/>
</dbReference>
<dbReference type="GO" id="GO:0015035">
    <property type="term" value="F:protein-disulfide reductase activity"/>
    <property type="evidence" value="ECO:0007669"/>
    <property type="project" value="InterPro"/>
</dbReference>
<dbReference type="GO" id="GO:0045454">
    <property type="term" value="P:cell redox homeostasis"/>
    <property type="evidence" value="ECO:0007669"/>
    <property type="project" value="EnsemblMetazoa"/>
</dbReference>
<dbReference type="GO" id="GO:0008340">
    <property type="term" value="P:determination of adult lifespan"/>
    <property type="evidence" value="ECO:0007669"/>
    <property type="project" value="EnsemblMetazoa"/>
</dbReference>
<dbReference type="GO" id="GO:0006979">
    <property type="term" value="P:response to oxidative stress"/>
    <property type="evidence" value="ECO:0007669"/>
    <property type="project" value="EnsemblMetazoa"/>
</dbReference>
<dbReference type="CDD" id="cd02947">
    <property type="entry name" value="TRX_family"/>
    <property type="match status" value="1"/>
</dbReference>
<dbReference type="FunFam" id="3.40.30.10:FF:000104">
    <property type="entry name" value="Thioredoxin"/>
    <property type="match status" value="1"/>
</dbReference>
<dbReference type="Gene3D" id="3.40.30.10">
    <property type="entry name" value="Glutaredoxin"/>
    <property type="match status" value="1"/>
</dbReference>
<dbReference type="InterPro" id="IPR005746">
    <property type="entry name" value="Thioredoxin"/>
</dbReference>
<dbReference type="InterPro" id="IPR036249">
    <property type="entry name" value="Thioredoxin-like_sf"/>
</dbReference>
<dbReference type="InterPro" id="IPR017937">
    <property type="entry name" value="Thioredoxin_CS"/>
</dbReference>
<dbReference type="InterPro" id="IPR013766">
    <property type="entry name" value="Thioredoxin_domain"/>
</dbReference>
<dbReference type="NCBIfam" id="TIGR01068">
    <property type="entry name" value="thioredoxin"/>
    <property type="match status" value="1"/>
</dbReference>
<dbReference type="PANTHER" id="PTHR46115">
    <property type="entry name" value="THIOREDOXIN-LIKE PROTEIN 1"/>
    <property type="match status" value="1"/>
</dbReference>
<dbReference type="Pfam" id="PF00085">
    <property type="entry name" value="Thioredoxin"/>
    <property type="match status" value="1"/>
</dbReference>
<dbReference type="PIRSF" id="PIRSF000077">
    <property type="entry name" value="Thioredoxin"/>
    <property type="match status" value="1"/>
</dbReference>
<dbReference type="PRINTS" id="PR00421">
    <property type="entry name" value="THIOREDOXIN"/>
</dbReference>
<dbReference type="SUPFAM" id="SSF52833">
    <property type="entry name" value="Thioredoxin-like"/>
    <property type="match status" value="1"/>
</dbReference>
<dbReference type="PROSITE" id="PS00194">
    <property type="entry name" value="THIOREDOXIN_1"/>
    <property type="match status" value="1"/>
</dbReference>
<dbReference type="PROSITE" id="PS51352">
    <property type="entry name" value="THIOREDOXIN_2"/>
    <property type="match status" value="1"/>
</dbReference>